<sequence>MPPSGLRLLPLLLPLLWLLVLTPGRPAAGLSTCKTIDMELVKRKRIEAIRGQILSKLRLASPPSQGDVPPGPLPEAVLALYNSTRDRVAGESVEPEPEPEADYYAKEVTRVLMVESGNQIYDKFKGTPHSLYMLFNTSELREAVPEPVLLSRAELRLLRLKLKVEQHVELYQKYSNDSWRYLSNRLLAPSDSPEWLSFDVTGVVRQWLTRREAIEGFRLSAHCSCDSKDNTLHVEINGFNSGRRGDLATIHGMNRPFLLLMATPLERAQHLHSSRHRRALDTNYCFSSTEKNCCVRQLYIDFRKDLGWKWIHEPKGYHANFCLGPCPYIWSLDTQYSKVLALYNQHNPGASAAPCCVPQALEPLPIVYYVGRKPKVEQLSNMIVRSCKCS</sequence>
<feature type="signal peptide" evidence="1">
    <location>
        <begin position="1"/>
        <end position="29"/>
    </location>
</feature>
<feature type="chain" id="PRO_0000033768" description="Latency-associated peptide" evidence="8">
    <location>
        <begin position="30"/>
        <end position="278"/>
    </location>
</feature>
<feature type="chain" id="PRO_0000033769" description="Transforming growth factor beta-1" evidence="8">
    <location>
        <begin position="279"/>
        <end position="390"/>
    </location>
</feature>
<feature type="region of interest" description="Straightjacket domain" evidence="4">
    <location>
        <begin position="30"/>
        <end position="74"/>
    </location>
</feature>
<feature type="region of interest" description="Arm domain" evidence="4">
    <location>
        <begin position="75"/>
        <end position="271"/>
    </location>
</feature>
<feature type="region of interest" description="Bowtie tail" evidence="1">
    <location>
        <begin position="226"/>
        <end position="252"/>
    </location>
</feature>
<feature type="short sequence motif" description="Cell attachment site" evidence="4">
    <location>
        <begin position="244"/>
        <end position="246"/>
    </location>
</feature>
<feature type="site" description="Cleavage; by FURIN" evidence="1">
    <location>
        <begin position="278"/>
        <end position="279"/>
    </location>
</feature>
<feature type="glycosylation site" description="N-linked (GlcNAc...) asparagine" evidence="4 11">
    <location>
        <position position="82"/>
    </location>
</feature>
<feature type="glycosylation site" description="N-linked (GlcNAc...) asparagine" evidence="4">
    <location>
        <position position="136"/>
    </location>
</feature>
<feature type="glycosylation site" description="N-linked (GlcNAc...) asparagine" evidence="3">
    <location>
        <position position="176"/>
    </location>
</feature>
<feature type="disulfide bond" description="Interchain (with C-? in LTBP1 TB3 domain); in inactive form" evidence="4">
    <location>
        <position position="33"/>
    </location>
</feature>
<feature type="disulfide bond" description="Interchain (with C-225)" evidence="4 5 11">
    <location>
        <position position="223"/>
    </location>
</feature>
<feature type="disulfide bond" description="Interchain (with C-223)" evidence="4 5 11">
    <location>
        <position position="225"/>
    </location>
</feature>
<feature type="disulfide bond" evidence="4 5 11">
    <location>
        <begin position="285"/>
        <end position="294"/>
    </location>
</feature>
<feature type="disulfide bond" evidence="4 5 11">
    <location>
        <begin position="293"/>
        <end position="356"/>
    </location>
</feature>
<feature type="disulfide bond" evidence="4 5 11">
    <location>
        <begin position="322"/>
        <end position="387"/>
    </location>
</feature>
<feature type="disulfide bond" evidence="4 5 11">
    <location>
        <begin position="326"/>
        <end position="389"/>
    </location>
</feature>
<feature type="disulfide bond" description="Interchain" evidence="4 5 11">
    <location>
        <position position="355"/>
    </location>
</feature>
<feature type="sequence variant" evidence="6">
    <original>V</original>
    <variation>L</variation>
    <location>
        <position position="114"/>
    </location>
</feature>
<feature type="mutagenesis site" description="Results in spontaneous, non integrin-dependent activation." evidence="4">
    <original>Y</original>
    <variation>A</variation>
    <variation>K</variation>
    <variation>T</variation>
    <location>
        <position position="103"/>
    </location>
</feature>
<feature type="mutagenesis site" description="Results in spontaneous, non integrin-dependent activation." evidence="4">
    <original>Y</original>
    <variation>A</variation>
    <variation>C</variation>
    <variation>S</variation>
    <variation>T</variation>
    <location>
        <position position="104"/>
    </location>
</feature>
<feature type="sequence conflict" description="In Ref. 3; CAA30933." evidence="7" ref="3">
    <original>LR</original>
    <variation>PG</variation>
    <location>
        <begin position="6"/>
        <end position="7"/>
    </location>
</feature>
<feature type="sequence conflict" description="In Ref. 3; CAA30933." evidence="7" ref="3">
    <original>R</original>
    <variation>G</variation>
    <location>
        <position position="180"/>
    </location>
</feature>
<feature type="sequence conflict" description="In Ref. 3; CAA30933." evidence="7" ref="3">
    <original>N</original>
    <variation>NA</variation>
    <location>
        <position position="237"/>
    </location>
</feature>
<feature type="helix" evidence="12">
    <location>
        <begin position="32"/>
        <end position="56"/>
    </location>
</feature>
<feature type="helix" evidence="12">
    <location>
        <begin position="75"/>
        <end position="85"/>
    </location>
</feature>
<feature type="strand" evidence="12">
    <location>
        <begin position="106"/>
        <end position="112"/>
    </location>
</feature>
<feature type="strand" evidence="12">
    <location>
        <begin position="116"/>
        <end position="119"/>
    </location>
</feature>
<feature type="turn" evidence="12">
    <location>
        <begin position="120"/>
        <end position="126"/>
    </location>
</feature>
<feature type="strand" evidence="12">
    <location>
        <begin position="130"/>
        <end position="136"/>
    </location>
</feature>
<feature type="helix" evidence="12">
    <location>
        <begin position="137"/>
        <end position="143"/>
    </location>
</feature>
<feature type="helix" evidence="12">
    <location>
        <begin position="147"/>
        <end position="149"/>
    </location>
</feature>
<feature type="strand" evidence="12">
    <location>
        <begin position="150"/>
        <end position="159"/>
    </location>
</feature>
<feature type="strand" evidence="12">
    <location>
        <begin position="166"/>
        <end position="172"/>
    </location>
</feature>
<feature type="strand" evidence="12">
    <location>
        <begin position="175"/>
        <end position="177"/>
    </location>
</feature>
<feature type="strand" evidence="12">
    <location>
        <begin position="180"/>
        <end position="187"/>
    </location>
</feature>
<feature type="strand" evidence="12">
    <location>
        <begin position="194"/>
        <end position="199"/>
    </location>
</feature>
<feature type="helix" evidence="12">
    <location>
        <begin position="201"/>
        <end position="209"/>
    </location>
</feature>
<feature type="strand" evidence="12">
    <location>
        <begin position="213"/>
        <end position="221"/>
    </location>
</feature>
<feature type="strand" evidence="12">
    <location>
        <begin position="224"/>
        <end position="228"/>
    </location>
</feature>
<feature type="strand" evidence="12">
    <location>
        <begin position="231"/>
        <end position="235"/>
    </location>
</feature>
<feature type="helix" evidence="13">
    <location>
        <begin position="245"/>
        <end position="248"/>
    </location>
</feature>
<feature type="helix" evidence="13">
    <location>
        <begin position="250"/>
        <end position="252"/>
    </location>
</feature>
<feature type="strand" evidence="12">
    <location>
        <begin position="257"/>
        <end position="262"/>
    </location>
</feature>
<feature type="helix" evidence="12">
    <location>
        <begin position="265"/>
        <end position="267"/>
    </location>
</feature>
<feature type="helix" evidence="12">
    <location>
        <begin position="282"/>
        <end position="285"/>
    </location>
</feature>
<feature type="strand" evidence="12">
    <location>
        <begin position="291"/>
        <end position="296"/>
    </location>
</feature>
<feature type="strand" evidence="12">
    <location>
        <begin position="299"/>
        <end position="301"/>
    </location>
</feature>
<feature type="turn" evidence="12">
    <location>
        <begin position="302"/>
        <end position="306"/>
    </location>
</feature>
<feature type="strand" evidence="12">
    <location>
        <begin position="310"/>
        <end position="313"/>
    </location>
</feature>
<feature type="strand" evidence="12">
    <location>
        <begin position="315"/>
        <end position="318"/>
    </location>
</feature>
<feature type="strand" evidence="12">
    <location>
        <begin position="321"/>
        <end position="323"/>
    </location>
</feature>
<feature type="helix" evidence="12">
    <location>
        <begin position="329"/>
        <end position="331"/>
    </location>
</feature>
<feature type="strand" evidence="12">
    <location>
        <begin position="332"/>
        <end position="334"/>
    </location>
</feature>
<feature type="helix" evidence="12">
    <location>
        <begin position="337"/>
        <end position="340"/>
    </location>
</feature>
<feature type="helix" evidence="12">
    <location>
        <begin position="341"/>
        <end position="345"/>
    </location>
</feature>
<feature type="turn" evidence="12">
    <location>
        <begin position="348"/>
        <end position="350"/>
    </location>
</feature>
<feature type="strand" evidence="12">
    <location>
        <begin position="351"/>
        <end position="353"/>
    </location>
</feature>
<feature type="strand" evidence="12">
    <location>
        <begin position="355"/>
        <end position="370"/>
    </location>
</feature>
<feature type="strand" evidence="12">
    <location>
        <begin position="373"/>
        <end position="384"/>
    </location>
</feature>
<feature type="strand" evidence="12">
    <location>
        <begin position="386"/>
        <end position="390"/>
    </location>
</feature>
<accession>P07200</accession>
<accession>K7GQZ2</accession>
<accession>P08832</accession>
<proteinExistence type="evidence at protein level"/>
<evidence type="ECO:0000250" key="1">
    <source>
        <dbReference type="UniProtKB" id="P01137"/>
    </source>
</evidence>
<evidence type="ECO:0000250" key="2">
    <source>
        <dbReference type="UniProtKB" id="P04202"/>
    </source>
</evidence>
<evidence type="ECO:0000255" key="3"/>
<evidence type="ECO:0000269" key="4">
    <source>
    </source>
</evidence>
<evidence type="ECO:0000269" key="5">
    <source>
    </source>
</evidence>
<evidence type="ECO:0000269" key="6">
    <source>
    </source>
</evidence>
<evidence type="ECO:0000305" key="7"/>
<evidence type="ECO:0000305" key="8">
    <source>
    </source>
</evidence>
<evidence type="ECO:0000305" key="9">
    <source>
    </source>
</evidence>
<evidence type="ECO:0000305" key="10">
    <source ref="4"/>
</evidence>
<evidence type="ECO:0007744" key="11">
    <source>
        <dbReference type="PDB" id="5VQF"/>
    </source>
</evidence>
<evidence type="ECO:0007829" key="12">
    <source>
        <dbReference type="PDB" id="5VQF"/>
    </source>
</evidence>
<evidence type="ECO:0007829" key="13">
    <source>
        <dbReference type="PDB" id="6UJA"/>
    </source>
</evidence>
<keyword id="KW-0002">3D-structure</keyword>
<keyword id="KW-0165">Cleavage on pair of basic residues</keyword>
<keyword id="KW-0903">Direct protein sequencing</keyword>
<keyword id="KW-1015">Disulfide bond</keyword>
<keyword id="KW-0272">Extracellular matrix</keyword>
<keyword id="KW-0325">Glycoprotein</keyword>
<keyword id="KW-0339">Growth factor</keyword>
<keyword id="KW-0497">Mitogen</keyword>
<keyword id="KW-1185">Reference proteome</keyword>
<keyword id="KW-0964">Secreted</keyword>
<keyword id="KW-0732">Signal</keyword>
<dbReference type="EMBL" id="Y00111">
    <property type="protein sequence ID" value="CAA68291.1"/>
    <property type="molecule type" value="mRNA"/>
</dbReference>
<dbReference type="EMBL" id="M23703">
    <property type="protein sequence ID" value="AAA64616.1"/>
    <property type="molecule type" value="mRNA"/>
</dbReference>
<dbReference type="EMBL" id="X12373">
    <property type="protein sequence ID" value="CAA30933.1"/>
    <property type="molecule type" value="mRNA"/>
</dbReference>
<dbReference type="EMBL" id="AF461808">
    <property type="protein sequence ID" value="AAL57902.1"/>
    <property type="molecule type" value="mRNA"/>
</dbReference>
<dbReference type="EMBL" id="AEMK02000041">
    <property type="status" value="NOT_ANNOTATED_CDS"/>
    <property type="molecule type" value="Genomic_DNA"/>
</dbReference>
<dbReference type="PIR" id="A27512">
    <property type="entry name" value="A27512"/>
</dbReference>
<dbReference type="PIR" id="S01413">
    <property type="entry name" value="S01413"/>
</dbReference>
<dbReference type="RefSeq" id="NP_999180.2">
    <property type="nucleotide sequence ID" value="NM_214015.2"/>
</dbReference>
<dbReference type="PDB" id="5VQF">
    <property type="method" value="X-ray"/>
    <property type="resolution" value="2.90 A"/>
    <property type="chains" value="A/B/C/D=30-390"/>
</dbReference>
<dbReference type="PDB" id="6UJA">
    <property type="method" value="EM"/>
    <property type="resolution" value="3.30 A"/>
    <property type="chains" value="D=30-390"/>
</dbReference>
<dbReference type="PDBsum" id="5VQF"/>
<dbReference type="PDBsum" id="6UJA"/>
<dbReference type="EMDB" id="EMD-20794"/>
<dbReference type="SMR" id="P07200"/>
<dbReference type="DIP" id="DIP-35732N"/>
<dbReference type="FunCoup" id="P07200">
    <property type="interactions" value="476"/>
</dbReference>
<dbReference type="IntAct" id="P07200">
    <property type="interactions" value="3"/>
</dbReference>
<dbReference type="STRING" id="9823.ENSSSCP00000030317"/>
<dbReference type="GlyCosmos" id="P07200">
    <property type="glycosylation" value="3 sites, No reported glycans"/>
</dbReference>
<dbReference type="GlyGen" id="P07200">
    <property type="glycosylation" value="3 sites"/>
</dbReference>
<dbReference type="iPTMnet" id="P07200"/>
<dbReference type="PaxDb" id="9823-ENSSSCP00000003267"/>
<dbReference type="Ensembl" id="ENSSSCT00000036469.4">
    <property type="protein sequence ID" value="ENSSSCP00000030317.2"/>
    <property type="gene ID" value="ENSSSCG00000003017.6"/>
</dbReference>
<dbReference type="Ensembl" id="ENSSSCT00015109974.1">
    <property type="protein sequence ID" value="ENSSSCP00015046877.1"/>
    <property type="gene ID" value="ENSSSCG00015080792.1"/>
</dbReference>
<dbReference type="Ensembl" id="ENSSSCT00025026430.1">
    <property type="protein sequence ID" value="ENSSSCP00025011191.1"/>
    <property type="gene ID" value="ENSSSCG00025019487.1"/>
</dbReference>
<dbReference type="Ensembl" id="ENSSSCT00030029290.1">
    <property type="protein sequence ID" value="ENSSSCP00030013147.1"/>
    <property type="gene ID" value="ENSSSCG00030021126.1"/>
</dbReference>
<dbReference type="Ensembl" id="ENSSSCT00035051620.1">
    <property type="protein sequence ID" value="ENSSSCP00035020698.1"/>
    <property type="gene ID" value="ENSSSCG00035038894.1"/>
</dbReference>
<dbReference type="Ensembl" id="ENSSSCT00040094188.1">
    <property type="protein sequence ID" value="ENSSSCP00040041585.1"/>
    <property type="gene ID" value="ENSSSCG00040068791.1"/>
</dbReference>
<dbReference type="Ensembl" id="ENSSSCT00045055664.1">
    <property type="protein sequence ID" value="ENSSSCP00045038824.1"/>
    <property type="gene ID" value="ENSSSCG00045032593.1"/>
</dbReference>
<dbReference type="Ensembl" id="ENSSSCT00050031315.1">
    <property type="protein sequence ID" value="ENSSSCP00050013072.1"/>
    <property type="gene ID" value="ENSSSCG00050023190.1"/>
</dbReference>
<dbReference type="Ensembl" id="ENSSSCT00055017714.1">
    <property type="protein sequence ID" value="ENSSSCP00055013996.1"/>
    <property type="gene ID" value="ENSSSCG00055009042.1"/>
</dbReference>
<dbReference type="Ensembl" id="ENSSSCT00060095738.1">
    <property type="protein sequence ID" value="ENSSSCP00060041409.1"/>
    <property type="gene ID" value="ENSSSCG00060070125.1"/>
</dbReference>
<dbReference type="Ensembl" id="ENSSSCT00065016364.1">
    <property type="protein sequence ID" value="ENSSSCP00065006672.1"/>
    <property type="gene ID" value="ENSSSCG00065012270.1"/>
</dbReference>
<dbReference type="Ensembl" id="ENSSSCT00070003600.1">
    <property type="protein sequence ID" value="ENSSSCP00070002984.1"/>
    <property type="gene ID" value="ENSSSCG00070001924.1"/>
</dbReference>
<dbReference type="Ensembl" id="ENSSSCT00105063742">
    <property type="protein sequence ID" value="ENSSSCP00105045308"/>
    <property type="gene ID" value="ENSSSCG00105033465"/>
</dbReference>
<dbReference type="Ensembl" id="ENSSSCT00110068157">
    <property type="protein sequence ID" value="ENSSSCP00110048007"/>
    <property type="gene ID" value="ENSSSCG00110035834"/>
</dbReference>
<dbReference type="Ensembl" id="ENSSSCT00115023833">
    <property type="protein sequence ID" value="ENSSSCP00115022599"/>
    <property type="gene ID" value="ENSSSCG00115013672"/>
</dbReference>
<dbReference type="Ensembl" id="ENSSSCT00130053360">
    <property type="protein sequence ID" value="ENSSSCP00130038032"/>
    <property type="gene ID" value="ENSSSCG00130027410"/>
</dbReference>
<dbReference type="GeneID" id="397078"/>
<dbReference type="KEGG" id="ssc:397078"/>
<dbReference type="CTD" id="7040"/>
<dbReference type="VGNC" id="VGNC:98656">
    <property type="gene designation" value="TGFB1"/>
</dbReference>
<dbReference type="eggNOG" id="KOG3900">
    <property type="taxonomic scope" value="Eukaryota"/>
</dbReference>
<dbReference type="GeneTree" id="ENSGT00940000160457"/>
<dbReference type="HOGENOM" id="CLU_039840_1_0_1"/>
<dbReference type="InParanoid" id="P07200"/>
<dbReference type="OMA" id="SHNCCLK"/>
<dbReference type="OrthoDB" id="8863549at2759"/>
<dbReference type="Reactome" id="R-SSC-114608">
    <property type="pathway name" value="Platelet degranulation"/>
</dbReference>
<dbReference type="Reactome" id="R-SSC-202733">
    <property type="pathway name" value="Cell surface interactions at the vascular wall"/>
</dbReference>
<dbReference type="Reactome" id="R-SSC-2129379">
    <property type="pathway name" value="Molecules associated with elastic fibres"/>
</dbReference>
<dbReference type="Reactome" id="R-SSC-2173788">
    <property type="pathway name" value="Downregulation of TGF-beta receptor signaling"/>
</dbReference>
<dbReference type="Reactome" id="R-SSC-2173789">
    <property type="pathway name" value="TGF-beta receptor signaling activates SMADs"/>
</dbReference>
<dbReference type="Reactome" id="R-SSC-2173791">
    <property type="pathway name" value="TGF-beta receptor signaling in EMT (epithelial to mesenchymal transition)"/>
</dbReference>
<dbReference type="Reactome" id="R-SSC-3000170">
    <property type="pathway name" value="Syndecan interactions"/>
</dbReference>
<dbReference type="Reactome" id="R-SSC-8941855">
    <property type="pathway name" value="RUNX3 regulates CDKN1A transcription"/>
</dbReference>
<dbReference type="Reactome" id="R-SSC-8941858">
    <property type="pathway name" value="Regulation of RUNX3 expression and activity"/>
</dbReference>
<dbReference type="Reactome" id="R-SSC-8951936">
    <property type="pathway name" value="RUNX3 regulates p14-ARF"/>
</dbReference>
<dbReference type="Reactome" id="R-SSC-9839389">
    <property type="pathway name" value="TGFBR3 regulates TGF-beta signaling"/>
</dbReference>
<dbReference type="ChiTaRS" id="TGFB1">
    <property type="organism name" value="pig"/>
</dbReference>
<dbReference type="EvolutionaryTrace" id="P07200"/>
<dbReference type="Proteomes" id="UP000008227">
    <property type="component" value="Chromosome 6"/>
</dbReference>
<dbReference type="Proteomes" id="UP000314985">
    <property type="component" value="Chromosome 6"/>
</dbReference>
<dbReference type="Proteomes" id="UP000694570">
    <property type="component" value="Unplaced"/>
</dbReference>
<dbReference type="Proteomes" id="UP000694571">
    <property type="component" value="Unplaced"/>
</dbReference>
<dbReference type="Proteomes" id="UP000694720">
    <property type="component" value="Unplaced"/>
</dbReference>
<dbReference type="Proteomes" id="UP000694722">
    <property type="component" value="Unplaced"/>
</dbReference>
<dbReference type="Proteomes" id="UP000694723">
    <property type="component" value="Unplaced"/>
</dbReference>
<dbReference type="Proteomes" id="UP000694724">
    <property type="component" value="Unplaced"/>
</dbReference>
<dbReference type="Proteomes" id="UP000694725">
    <property type="component" value="Unplaced"/>
</dbReference>
<dbReference type="Proteomes" id="UP000694726">
    <property type="component" value="Unplaced"/>
</dbReference>
<dbReference type="Proteomes" id="UP000694727">
    <property type="component" value="Unplaced"/>
</dbReference>
<dbReference type="Proteomes" id="UP000694728">
    <property type="component" value="Unplaced"/>
</dbReference>
<dbReference type="Bgee" id="ENSSSCG00000003017">
    <property type="expression patterns" value="Expressed in blood and 42 other cell types or tissues"/>
</dbReference>
<dbReference type="GO" id="GO:0072562">
    <property type="term" value="C:blood microparticle"/>
    <property type="evidence" value="ECO:0000250"/>
    <property type="project" value="AgBase"/>
</dbReference>
<dbReference type="GO" id="GO:0009986">
    <property type="term" value="C:cell surface"/>
    <property type="evidence" value="ECO:0000250"/>
    <property type="project" value="UniProtKB"/>
</dbReference>
<dbReference type="GO" id="GO:0005737">
    <property type="term" value="C:cytoplasm"/>
    <property type="evidence" value="ECO:0000250"/>
    <property type="project" value="UniProtKB"/>
</dbReference>
<dbReference type="GO" id="GO:0031012">
    <property type="term" value="C:extracellular matrix"/>
    <property type="evidence" value="ECO:0000250"/>
    <property type="project" value="UniProtKB"/>
</dbReference>
<dbReference type="GO" id="GO:0005615">
    <property type="term" value="C:extracellular space"/>
    <property type="evidence" value="ECO:0000250"/>
    <property type="project" value="UniProtKB"/>
</dbReference>
<dbReference type="GO" id="GO:0005902">
    <property type="term" value="C:microvillus"/>
    <property type="evidence" value="ECO:0007669"/>
    <property type="project" value="Ensembl"/>
</dbReference>
<dbReference type="GO" id="GO:0005634">
    <property type="term" value="C:nucleus"/>
    <property type="evidence" value="ECO:0000250"/>
    <property type="project" value="UniProtKB"/>
</dbReference>
<dbReference type="GO" id="GO:0005125">
    <property type="term" value="F:cytokine activity"/>
    <property type="evidence" value="ECO:0000318"/>
    <property type="project" value="GO_Central"/>
</dbReference>
<dbReference type="GO" id="GO:0035800">
    <property type="term" value="F:deubiquitinase activator activity"/>
    <property type="evidence" value="ECO:0007669"/>
    <property type="project" value="Ensembl"/>
</dbReference>
<dbReference type="GO" id="GO:0019899">
    <property type="term" value="F:enzyme binding"/>
    <property type="evidence" value="ECO:0007669"/>
    <property type="project" value="Ensembl"/>
</dbReference>
<dbReference type="GO" id="GO:0008083">
    <property type="term" value="F:growth factor activity"/>
    <property type="evidence" value="ECO:0007669"/>
    <property type="project" value="UniProtKB-KW"/>
</dbReference>
<dbReference type="GO" id="GO:0042802">
    <property type="term" value="F:identical protein binding"/>
    <property type="evidence" value="ECO:0000353"/>
    <property type="project" value="IntAct"/>
</dbReference>
<dbReference type="GO" id="GO:0043539">
    <property type="term" value="F:protein serine/threonine kinase activator activity"/>
    <property type="evidence" value="ECO:0007669"/>
    <property type="project" value="Ensembl"/>
</dbReference>
<dbReference type="GO" id="GO:0034713">
    <property type="term" value="F:type I transforming growth factor beta receptor binding"/>
    <property type="evidence" value="ECO:0000250"/>
    <property type="project" value="AgBase"/>
</dbReference>
<dbReference type="GO" id="GO:0005114">
    <property type="term" value="F:type II transforming growth factor beta receptor binding"/>
    <property type="evidence" value="ECO:0000250"/>
    <property type="project" value="UniProtKB"/>
</dbReference>
<dbReference type="GO" id="GO:0034714">
    <property type="term" value="F:type III transforming growth factor beta receptor binding"/>
    <property type="evidence" value="ECO:0000250"/>
    <property type="project" value="AgBase"/>
</dbReference>
<dbReference type="GO" id="GO:0002460">
    <property type="term" value="P:adaptive immune response based on somatic recombination of immune receptors built from immunoglobulin superfamily domains"/>
    <property type="evidence" value="ECO:0007669"/>
    <property type="project" value="Ensembl"/>
</dbReference>
<dbReference type="GO" id="GO:0003180">
    <property type="term" value="P:aortic valve morphogenesis"/>
    <property type="evidence" value="ECO:0007669"/>
    <property type="project" value="Ensembl"/>
</dbReference>
<dbReference type="GO" id="GO:0006754">
    <property type="term" value="P:ATP biosynthetic process"/>
    <property type="evidence" value="ECO:0000250"/>
    <property type="project" value="UniProtKB"/>
</dbReference>
<dbReference type="GO" id="GO:0060751">
    <property type="term" value="P:branch elongation involved in mammary gland duct branching"/>
    <property type="evidence" value="ECO:0007669"/>
    <property type="project" value="Ensembl"/>
</dbReference>
<dbReference type="GO" id="GO:0060435">
    <property type="term" value="P:bronchiole development"/>
    <property type="evidence" value="ECO:0007669"/>
    <property type="project" value="Ensembl"/>
</dbReference>
<dbReference type="GO" id="GO:0060070">
    <property type="term" value="P:canonical Wnt signaling pathway"/>
    <property type="evidence" value="ECO:0007669"/>
    <property type="project" value="Ensembl"/>
</dbReference>
<dbReference type="GO" id="GO:0000902">
    <property type="term" value="P:cell morphogenesis"/>
    <property type="evidence" value="ECO:0007669"/>
    <property type="project" value="Ensembl"/>
</dbReference>
<dbReference type="GO" id="GO:0045216">
    <property type="term" value="P:cell-cell junction organization"/>
    <property type="evidence" value="ECO:0000250"/>
    <property type="project" value="UniProtKB"/>
</dbReference>
<dbReference type="GO" id="GO:0071456">
    <property type="term" value="P:cellular response to hypoxia"/>
    <property type="evidence" value="ECO:0007669"/>
    <property type="project" value="Ensembl"/>
</dbReference>
<dbReference type="GO" id="GO:0071479">
    <property type="term" value="P:cellular response to ionizing radiation"/>
    <property type="evidence" value="ECO:0007669"/>
    <property type="project" value="Ensembl"/>
</dbReference>
<dbReference type="GO" id="GO:0071404">
    <property type="term" value="P:cellular response to low-density lipoprotein particle stimulus"/>
    <property type="evidence" value="ECO:0007669"/>
    <property type="project" value="Ensembl"/>
</dbReference>
<dbReference type="GO" id="GO:0071560">
    <property type="term" value="P:cellular response to transforming growth factor beta stimulus"/>
    <property type="evidence" value="ECO:0000250"/>
    <property type="project" value="AgBase"/>
</dbReference>
<dbReference type="GO" id="GO:0098586">
    <property type="term" value="P:cellular response to virus"/>
    <property type="evidence" value="ECO:0007669"/>
    <property type="project" value="Ensembl"/>
</dbReference>
<dbReference type="GO" id="GO:0002062">
    <property type="term" value="P:chondrocyte differentiation"/>
    <property type="evidence" value="ECO:0000250"/>
    <property type="project" value="UniProtKB"/>
</dbReference>
<dbReference type="GO" id="GO:0002069">
    <property type="term" value="P:columnar/cuboidal epithelial cell maturation"/>
    <property type="evidence" value="ECO:0007669"/>
    <property type="project" value="Ensembl"/>
</dbReference>
<dbReference type="GO" id="GO:1990402">
    <property type="term" value="P:embryonic liver development"/>
    <property type="evidence" value="ECO:0007669"/>
    <property type="project" value="Ensembl"/>
</dbReference>
<dbReference type="GO" id="GO:0007492">
    <property type="term" value="P:endoderm development"/>
    <property type="evidence" value="ECO:0007669"/>
    <property type="project" value="Ensembl"/>
</dbReference>
<dbReference type="GO" id="GO:0050673">
    <property type="term" value="P:epithelial cell proliferation"/>
    <property type="evidence" value="ECO:0007669"/>
    <property type="project" value="Ensembl"/>
</dbReference>
<dbReference type="GO" id="GO:0001837">
    <property type="term" value="P:epithelial to mesenchymal transition"/>
    <property type="evidence" value="ECO:0000250"/>
    <property type="project" value="UniProtKB"/>
</dbReference>
<dbReference type="GO" id="GO:0085029">
    <property type="term" value="P:extracellular matrix assembly"/>
    <property type="evidence" value="ECO:0000250"/>
    <property type="project" value="UniProtKB"/>
</dbReference>
<dbReference type="GO" id="GO:0097191">
    <property type="term" value="P:extrinsic apoptotic signaling pathway"/>
    <property type="evidence" value="ECO:0000250"/>
    <property type="project" value="UniProtKB"/>
</dbReference>
<dbReference type="GO" id="GO:0060325">
    <property type="term" value="P:face morphogenesis"/>
    <property type="evidence" value="ECO:0007669"/>
    <property type="project" value="Ensembl"/>
</dbReference>
<dbReference type="GO" id="GO:0010467">
    <property type="term" value="P:gene expression"/>
    <property type="evidence" value="ECO:0007669"/>
    <property type="project" value="Ensembl"/>
</dbReference>
<dbReference type="GO" id="GO:0008354">
    <property type="term" value="P:germ cell migration"/>
    <property type="evidence" value="ECO:0007669"/>
    <property type="project" value="Ensembl"/>
</dbReference>
<dbReference type="GO" id="GO:0002244">
    <property type="term" value="P:hematopoietic progenitor cell differentiation"/>
    <property type="evidence" value="ECO:0000250"/>
    <property type="project" value="UniProtKB"/>
</dbReference>
<dbReference type="GO" id="GO:0030214">
    <property type="term" value="P:hyaluronan catabolic process"/>
    <property type="evidence" value="ECO:0000250"/>
    <property type="project" value="UniProtKB"/>
</dbReference>
<dbReference type="GO" id="GO:0006954">
    <property type="term" value="P:inflammatory response"/>
    <property type="evidence" value="ECO:0000250"/>
    <property type="project" value="UniProtKB"/>
</dbReference>
<dbReference type="GO" id="GO:0006874">
    <property type="term" value="P:intracellular calcium ion homeostasis"/>
    <property type="evidence" value="ECO:0007669"/>
    <property type="project" value="Ensembl"/>
</dbReference>
<dbReference type="GO" id="GO:0061520">
    <property type="term" value="P:Langerhans cell differentiation"/>
    <property type="evidence" value="ECO:0007669"/>
    <property type="project" value="Ensembl"/>
</dbReference>
<dbReference type="GO" id="GO:0070306">
    <property type="term" value="P:lens fiber cell differentiation"/>
    <property type="evidence" value="ECO:0007669"/>
    <property type="project" value="Ensembl"/>
</dbReference>
<dbReference type="GO" id="GO:0048286">
    <property type="term" value="P:lung alveolus development"/>
    <property type="evidence" value="ECO:0007669"/>
    <property type="project" value="Ensembl"/>
</dbReference>
<dbReference type="GO" id="GO:0048535">
    <property type="term" value="P:lymph node development"/>
    <property type="evidence" value="ECO:0000250"/>
    <property type="project" value="UniProtKB"/>
</dbReference>
<dbReference type="GO" id="GO:0060744">
    <property type="term" value="P:mammary gland branching involved in thelarche"/>
    <property type="evidence" value="ECO:0007669"/>
    <property type="project" value="Ensembl"/>
</dbReference>
<dbReference type="GO" id="GO:0031293">
    <property type="term" value="P:membrane protein intracellular domain proteolysis"/>
    <property type="evidence" value="ECO:0000250"/>
    <property type="project" value="UniProtKB"/>
</dbReference>
<dbReference type="GO" id="GO:0046716">
    <property type="term" value="P:muscle cell cellular homeostasis"/>
    <property type="evidence" value="ECO:0007669"/>
    <property type="project" value="Ensembl"/>
</dbReference>
<dbReference type="GO" id="GO:0070168">
    <property type="term" value="P:negative regulation of biomineral tissue development"/>
    <property type="evidence" value="ECO:0007669"/>
    <property type="project" value="Ensembl"/>
</dbReference>
<dbReference type="GO" id="GO:0043537">
    <property type="term" value="P:negative regulation of blood vessel endothelial cell migration"/>
    <property type="evidence" value="ECO:0000250"/>
    <property type="project" value="UniProtKB"/>
</dbReference>
<dbReference type="GO" id="GO:0045786">
    <property type="term" value="P:negative regulation of cell cycle"/>
    <property type="evidence" value="ECO:0000250"/>
    <property type="project" value="UniProtKB"/>
</dbReference>
<dbReference type="GO" id="GO:0030308">
    <property type="term" value="P:negative regulation of cell growth"/>
    <property type="evidence" value="ECO:0000250"/>
    <property type="project" value="UniProtKB"/>
</dbReference>
<dbReference type="GO" id="GO:0008285">
    <property type="term" value="P:negative regulation of cell population proliferation"/>
    <property type="evidence" value="ECO:0000250"/>
    <property type="project" value="UniProtKB"/>
</dbReference>
<dbReference type="GO" id="GO:2000048">
    <property type="term" value="P:negative regulation of cell-cell adhesion mediated by cadherin"/>
    <property type="evidence" value="ECO:0000250"/>
    <property type="project" value="UniProtKB"/>
</dbReference>
<dbReference type="GO" id="GO:0045892">
    <property type="term" value="P:negative regulation of DNA-templated transcription"/>
    <property type="evidence" value="ECO:0000250"/>
    <property type="project" value="UniProtKB"/>
</dbReference>
<dbReference type="GO" id="GO:0050680">
    <property type="term" value="P:negative regulation of epithelial cell proliferation"/>
    <property type="evidence" value="ECO:0000250"/>
    <property type="project" value="UniProtKB"/>
</dbReference>
<dbReference type="GO" id="GO:0045599">
    <property type="term" value="P:negative regulation of fat cell differentiation"/>
    <property type="evidence" value="ECO:0000250"/>
    <property type="project" value="UniProtKB"/>
</dbReference>
<dbReference type="GO" id="GO:0010629">
    <property type="term" value="P:negative regulation of gene expression"/>
    <property type="evidence" value="ECO:0000250"/>
    <property type="project" value="BHF-UCL"/>
</dbReference>
<dbReference type="GO" id="GO:1900126">
    <property type="term" value="P:negative regulation of hyaluronan biosynthetic process"/>
    <property type="evidence" value="ECO:0000250"/>
    <property type="project" value="UniProtKB"/>
</dbReference>
<dbReference type="GO" id="GO:0032700">
    <property type="term" value="P:negative regulation of interleukin-17 production"/>
    <property type="evidence" value="ECO:0007669"/>
    <property type="project" value="Ensembl"/>
</dbReference>
<dbReference type="GO" id="GO:0010936">
    <property type="term" value="P:negative regulation of macrophage cytokine production"/>
    <property type="evidence" value="ECO:0000250"/>
    <property type="project" value="AgBase"/>
</dbReference>
<dbReference type="GO" id="GO:1902894">
    <property type="term" value="P:negative regulation of miRNA transcription"/>
    <property type="evidence" value="ECO:0007669"/>
    <property type="project" value="Ensembl"/>
</dbReference>
<dbReference type="GO" id="GO:0045662">
    <property type="term" value="P:negative regulation of myoblast differentiation"/>
    <property type="evidence" value="ECO:0000250"/>
    <property type="project" value="UniProtKB"/>
</dbReference>
<dbReference type="GO" id="GO:0002859">
    <property type="term" value="P:negative regulation of natural killer cell mediated cytotoxicity directed against tumor cell target"/>
    <property type="evidence" value="ECO:0007669"/>
    <property type="project" value="Ensembl"/>
</dbReference>
<dbReference type="GO" id="GO:0030279">
    <property type="term" value="P:negative regulation of ossification"/>
    <property type="evidence" value="ECO:0007669"/>
    <property type="project" value="Ensembl"/>
</dbReference>
<dbReference type="GO" id="GO:1903077">
    <property type="term" value="P:negative regulation of protein localization to plasma membrane"/>
    <property type="evidence" value="ECO:0007669"/>
    <property type="project" value="Ensembl"/>
</dbReference>
<dbReference type="GO" id="GO:0048642">
    <property type="term" value="P:negative regulation of skeletal muscle tissue development"/>
    <property type="evidence" value="ECO:0000250"/>
    <property type="project" value="UniProtKB"/>
</dbReference>
<dbReference type="GO" id="GO:0042130">
    <property type="term" value="P:negative regulation of T cell proliferation"/>
    <property type="evidence" value="ECO:0007669"/>
    <property type="project" value="Ensembl"/>
</dbReference>
<dbReference type="GO" id="GO:0000122">
    <property type="term" value="P:negative regulation of transcription by RNA polymerase II"/>
    <property type="evidence" value="ECO:0007669"/>
    <property type="project" value="Ensembl"/>
</dbReference>
<dbReference type="GO" id="GO:0001843">
    <property type="term" value="P:neural tube closure"/>
    <property type="evidence" value="ECO:0007669"/>
    <property type="project" value="Ensembl"/>
</dbReference>
<dbReference type="GO" id="GO:0051402">
    <property type="term" value="P:neuron apoptotic process"/>
    <property type="evidence" value="ECO:0007669"/>
    <property type="project" value="Ensembl"/>
</dbReference>
<dbReference type="GO" id="GO:0007219">
    <property type="term" value="P:Notch signaling pathway"/>
    <property type="evidence" value="ECO:0007669"/>
    <property type="project" value="Ensembl"/>
</dbReference>
<dbReference type="GO" id="GO:0071895">
    <property type="term" value="P:odontoblast differentiation"/>
    <property type="evidence" value="ECO:0000250"/>
    <property type="project" value="UniProtKB"/>
</dbReference>
<dbReference type="GO" id="GO:0014003">
    <property type="term" value="P:oligodendrocyte development"/>
    <property type="evidence" value="ECO:0007669"/>
    <property type="project" value="Ensembl"/>
</dbReference>
<dbReference type="GO" id="GO:0030316">
    <property type="term" value="P:osteoclast differentiation"/>
    <property type="evidence" value="ECO:0007669"/>
    <property type="project" value="Ensembl"/>
</dbReference>
<dbReference type="GO" id="GO:0006796">
    <property type="term" value="P:phosphate-containing compound metabolic process"/>
    <property type="evidence" value="ECO:0000250"/>
    <property type="project" value="UniProtKB"/>
</dbReference>
<dbReference type="GO" id="GO:0055091">
    <property type="term" value="P:phospholipid homeostasis"/>
    <property type="evidence" value="ECO:0007669"/>
    <property type="project" value="Ensembl"/>
</dbReference>
<dbReference type="GO" id="GO:0043536">
    <property type="term" value="P:positive regulation of blood vessel endothelial cell migration"/>
    <property type="evidence" value="ECO:0000250"/>
    <property type="project" value="UniProtKB"/>
</dbReference>
<dbReference type="GO" id="GO:0043123">
    <property type="term" value="P:positive regulation of canonical NF-kappaB signal transduction"/>
    <property type="evidence" value="ECO:0007669"/>
    <property type="project" value="Ensembl"/>
</dbReference>
<dbReference type="GO" id="GO:0090263">
    <property type="term" value="P:positive regulation of canonical Wnt signaling pathway"/>
    <property type="evidence" value="ECO:0007669"/>
    <property type="project" value="Ensembl"/>
</dbReference>
<dbReference type="GO" id="GO:2000727">
    <property type="term" value="P:positive regulation of cardiac muscle cell differentiation"/>
    <property type="evidence" value="ECO:0007669"/>
    <property type="project" value="Ensembl"/>
</dbReference>
<dbReference type="GO" id="GO:0051781">
    <property type="term" value="P:positive regulation of cell division"/>
    <property type="evidence" value="ECO:0007669"/>
    <property type="project" value="UniProtKB-KW"/>
</dbReference>
<dbReference type="GO" id="GO:0030335">
    <property type="term" value="P:positive regulation of cell migration"/>
    <property type="evidence" value="ECO:0000250"/>
    <property type="project" value="UniProtKB"/>
</dbReference>
<dbReference type="GO" id="GO:0008284">
    <property type="term" value="P:positive regulation of cell population proliferation"/>
    <property type="evidence" value="ECO:0000250"/>
    <property type="project" value="UniProtKB"/>
</dbReference>
<dbReference type="GO" id="GO:2000343">
    <property type="term" value="P:positive regulation of chemokine (C-X-C motif) ligand 2 production"/>
    <property type="evidence" value="ECO:0007669"/>
    <property type="project" value="Ensembl"/>
</dbReference>
<dbReference type="GO" id="GO:0050921">
    <property type="term" value="P:positive regulation of chemotaxis"/>
    <property type="evidence" value="ECO:0000250"/>
    <property type="project" value="UniProtKB"/>
</dbReference>
<dbReference type="GO" id="GO:0032967">
    <property type="term" value="P:positive regulation of collagen biosynthetic process"/>
    <property type="evidence" value="ECO:0000250"/>
    <property type="project" value="UniProtKB"/>
</dbReference>
<dbReference type="GO" id="GO:0045893">
    <property type="term" value="P:positive regulation of DNA-templated transcription"/>
    <property type="evidence" value="ECO:0000250"/>
    <property type="project" value="UniProtKB"/>
</dbReference>
<dbReference type="GO" id="GO:2000353">
    <property type="term" value="P:positive regulation of endothelial cell apoptotic process"/>
    <property type="evidence" value="ECO:0007669"/>
    <property type="project" value="Ensembl"/>
</dbReference>
<dbReference type="GO" id="GO:0045742">
    <property type="term" value="P:positive regulation of epidermal growth factor receptor signaling pathway"/>
    <property type="evidence" value="ECO:0000250"/>
    <property type="project" value="UniProtKB"/>
</dbReference>
<dbReference type="GO" id="GO:0010718">
    <property type="term" value="P:positive regulation of epithelial to mesenchymal transition"/>
    <property type="evidence" value="ECO:0000250"/>
    <property type="project" value="UniProtKB"/>
</dbReference>
<dbReference type="GO" id="GO:0070374">
    <property type="term" value="P:positive regulation of ERK1 and ERK2 cascade"/>
    <property type="evidence" value="ECO:0000250"/>
    <property type="project" value="UniProtKB"/>
</dbReference>
<dbReference type="GO" id="GO:1901203">
    <property type="term" value="P:positive regulation of extracellular matrix assembly"/>
    <property type="evidence" value="ECO:0007669"/>
    <property type="project" value="Ensembl"/>
</dbReference>
<dbReference type="GO" id="GO:0010763">
    <property type="term" value="P:positive regulation of fibroblast migration"/>
    <property type="evidence" value="ECO:0000250"/>
    <property type="project" value="UniProtKB"/>
</dbReference>
<dbReference type="GO" id="GO:0048146">
    <property type="term" value="P:positive regulation of fibroblast proliferation"/>
    <property type="evidence" value="ECO:0007669"/>
    <property type="project" value="Ensembl"/>
</dbReference>
<dbReference type="GO" id="GO:0010628">
    <property type="term" value="P:positive regulation of gene expression"/>
    <property type="evidence" value="ECO:0000250"/>
    <property type="project" value="UniProtKB"/>
</dbReference>
<dbReference type="GO" id="GO:0050729">
    <property type="term" value="P:positive regulation of inflammatory response"/>
    <property type="evidence" value="ECO:0007669"/>
    <property type="project" value="Ensembl"/>
</dbReference>
<dbReference type="GO" id="GO:0032740">
    <property type="term" value="P:positive regulation of interleukin-17 production"/>
    <property type="evidence" value="ECO:0000250"/>
    <property type="project" value="UniProtKB"/>
</dbReference>
<dbReference type="GO" id="GO:0032755">
    <property type="term" value="P:positive regulation of interleukin-6 production"/>
    <property type="evidence" value="ECO:0007669"/>
    <property type="project" value="Ensembl"/>
</dbReference>
<dbReference type="GO" id="GO:0048298">
    <property type="term" value="P:positive regulation of isotype switching to IgA isotypes"/>
    <property type="evidence" value="ECO:0000250"/>
    <property type="project" value="AgBase"/>
</dbReference>
<dbReference type="GO" id="GO:1902462">
    <property type="term" value="P:positive regulation of mesenchymal stem cell proliferation"/>
    <property type="evidence" value="ECO:0007669"/>
    <property type="project" value="Ensembl"/>
</dbReference>
<dbReference type="GO" id="GO:0014008">
    <property type="term" value="P:positive regulation of microglia differentiation"/>
    <property type="evidence" value="ECO:0000250"/>
    <property type="project" value="UniProtKB"/>
</dbReference>
<dbReference type="GO" id="GO:1902895">
    <property type="term" value="P:positive regulation of miRNA transcription"/>
    <property type="evidence" value="ECO:0007669"/>
    <property type="project" value="Ensembl"/>
</dbReference>
<dbReference type="GO" id="GO:0042482">
    <property type="term" value="P:positive regulation of odontogenesis"/>
    <property type="evidence" value="ECO:0007669"/>
    <property type="project" value="Ensembl"/>
</dbReference>
<dbReference type="GO" id="GO:0051897">
    <property type="term" value="P:positive regulation of phosphatidylinositol 3-kinase/protein kinase B signal transduction"/>
    <property type="evidence" value="ECO:0007669"/>
    <property type="project" value="Ensembl"/>
</dbReference>
<dbReference type="GO" id="GO:2000636">
    <property type="term" value="P:positive regulation of primary miRNA processing"/>
    <property type="evidence" value="ECO:0007669"/>
    <property type="project" value="Ensembl"/>
</dbReference>
<dbReference type="GO" id="GO:0042307">
    <property type="term" value="P:positive regulation of protein import into nucleus"/>
    <property type="evidence" value="ECO:0000250"/>
    <property type="project" value="AgBase"/>
</dbReference>
<dbReference type="GO" id="GO:0051247">
    <property type="term" value="P:positive regulation of protein metabolic process"/>
    <property type="evidence" value="ECO:0000250"/>
    <property type="project" value="UniProtKB"/>
</dbReference>
<dbReference type="GO" id="GO:0050714">
    <property type="term" value="P:positive regulation of protein secretion"/>
    <property type="evidence" value="ECO:0000250"/>
    <property type="project" value="UniProtKB"/>
</dbReference>
<dbReference type="GO" id="GO:0031334">
    <property type="term" value="P:positive regulation of protein-containing complex assembly"/>
    <property type="evidence" value="ECO:0000250"/>
    <property type="project" value="UniProtKB"/>
</dbReference>
<dbReference type="GO" id="GO:1904894">
    <property type="term" value="P:positive regulation of receptor signaling pathway via STAT"/>
    <property type="evidence" value="ECO:0007669"/>
    <property type="project" value="Ensembl"/>
</dbReference>
<dbReference type="GO" id="GO:0045591">
    <property type="term" value="P:positive regulation of regulatory T cell differentiation"/>
    <property type="evidence" value="ECO:0007669"/>
    <property type="project" value="Ensembl"/>
</dbReference>
<dbReference type="GO" id="GO:0060391">
    <property type="term" value="P:positive regulation of SMAD protein signal transduction"/>
    <property type="evidence" value="ECO:0000250"/>
    <property type="project" value="UniProtKB"/>
</dbReference>
<dbReference type="GO" id="GO:0048661">
    <property type="term" value="P:positive regulation of smooth muscle cell proliferation"/>
    <property type="evidence" value="ECO:0007669"/>
    <property type="project" value="Ensembl"/>
</dbReference>
<dbReference type="GO" id="GO:0032930">
    <property type="term" value="P:positive regulation of superoxide anion generation"/>
    <property type="evidence" value="ECO:0000250"/>
    <property type="project" value="UniProtKB"/>
</dbReference>
<dbReference type="GO" id="GO:0045944">
    <property type="term" value="P:positive regulation of transcription by RNA polymerase II"/>
    <property type="evidence" value="ECO:0000250"/>
    <property type="project" value="AgBase"/>
</dbReference>
<dbReference type="GO" id="GO:0032760">
    <property type="term" value="P:positive regulation of tumor necrosis factor production"/>
    <property type="evidence" value="ECO:0007669"/>
    <property type="project" value="Ensembl"/>
</dbReference>
<dbReference type="GO" id="GO:0043117">
    <property type="term" value="P:positive regulation of vascular permeability"/>
    <property type="evidence" value="ECO:0007669"/>
    <property type="project" value="Ensembl"/>
</dbReference>
<dbReference type="GO" id="GO:1904018">
    <property type="term" value="P:positive regulation of vasculature development"/>
    <property type="evidence" value="ECO:0007669"/>
    <property type="project" value="Ensembl"/>
</dbReference>
<dbReference type="GO" id="GO:0006611">
    <property type="term" value="P:protein export from nucleus"/>
    <property type="evidence" value="ECO:0007669"/>
    <property type="project" value="Ensembl"/>
</dbReference>
<dbReference type="GO" id="GO:0032801">
    <property type="term" value="P:receptor catabolic process"/>
    <property type="evidence" value="ECO:0000250"/>
    <property type="project" value="UniProtKB"/>
</dbReference>
<dbReference type="GO" id="GO:0032956">
    <property type="term" value="P:regulation of actin cytoskeleton organization"/>
    <property type="evidence" value="ECO:0007669"/>
    <property type="project" value="Ensembl"/>
</dbReference>
<dbReference type="GO" id="GO:0060762">
    <property type="term" value="P:regulation of branching involved in mammary gland duct morphogenesis"/>
    <property type="evidence" value="ECO:0007669"/>
    <property type="project" value="Ensembl"/>
</dbReference>
<dbReference type="GO" id="GO:0061035">
    <property type="term" value="P:regulation of cartilage development"/>
    <property type="evidence" value="ECO:0007669"/>
    <property type="project" value="Ensembl"/>
</dbReference>
<dbReference type="GO" id="GO:0042127">
    <property type="term" value="P:regulation of cell population proliferation"/>
    <property type="evidence" value="ECO:0000318"/>
    <property type="project" value="GO_Central"/>
</dbReference>
<dbReference type="GO" id="GO:0070173">
    <property type="term" value="P:regulation of enamel mineralization"/>
    <property type="evidence" value="ECO:0007669"/>
    <property type="project" value="Ensembl"/>
</dbReference>
<dbReference type="GO" id="GO:0032667">
    <property type="term" value="P:regulation of interleukin-23 production"/>
    <property type="evidence" value="ECO:0007669"/>
    <property type="project" value="Ensembl"/>
</dbReference>
<dbReference type="GO" id="GO:0042306">
    <property type="term" value="P:regulation of protein import into nucleus"/>
    <property type="evidence" value="ECO:0000250"/>
    <property type="project" value="UniProtKB"/>
</dbReference>
<dbReference type="GO" id="GO:0002028">
    <property type="term" value="P:regulation of sodium ion transport"/>
    <property type="evidence" value="ECO:0007669"/>
    <property type="project" value="Ensembl"/>
</dbReference>
<dbReference type="GO" id="GO:0016202">
    <property type="term" value="P:regulation of striated muscle tissue development"/>
    <property type="evidence" value="ECO:0000250"/>
    <property type="project" value="UniProtKB"/>
</dbReference>
<dbReference type="GO" id="GO:0045066">
    <property type="term" value="P:regulatory T cell differentiation"/>
    <property type="evidence" value="ECO:0007669"/>
    <property type="project" value="Ensembl"/>
</dbReference>
<dbReference type="GO" id="GO:0070723">
    <property type="term" value="P:response to cholesterol"/>
    <property type="evidence" value="ECO:0000250"/>
    <property type="project" value="UniProtKB"/>
</dbReference>
<dbReference type="GO" id="GO:0032355">
    <property type="term" value="P:response to estradiol"/>
    <property type="evidence" value="ECO:0000250"/>
    <property type="project" value="UniProtKB"/>
</dbReference>
<dbReference type="GO" id="GO:0032570">
    <property type="term" value="P:response to progesterone"/>
    <property type="evidence" value="ECO:0000250"/>
    <property type="project" value="UniProtKB"/>
</dbReference>
<dbReference type="GO" id="GO:0009611">
    <property type="term" value="P:response to wounding"/>
    <property type="evidence" value="ECO:0000250"/>
    <property type="project" value="AgBase"/>
</dbReference>
<dbReference type="GO" id="GO:0061298">
    <property type="term" value="P:retina vasculature development in camera-type eye"/>
    <property type="evidence" value="ECO:0007669"/>
    <property type="project" value="Ensembl"/>
</dbReference>
<dbReference type="GO" id="GO:0007435">
    <property type="term" value="P:salivary gland morphogenesis"/>
    <property type="evidence" value="ECO:0000250"/>
    <property type="project" value="AgBase"/>
</dbReference>
<dbReference type="GO" id="GO:0002040">
    <property type="term" value="P:sprouting angiogenesis"/>
    <property type="evidence" value="ECO:0007669"/>
    <property type="project" value="Ensembl"/>
</dbReference>
<dbReference type="GO" id="GO:0072089">
    <property type="term" value="P:stem cell proliferation"/>
    <property type="evidence" value="ECO:0007669"/>
    <property type="project" value="Ensembl"/>
</dbReference>
<dbReference type="GO" id="GO:0043129">
    <property type="term" value="P:surfactant homeostasis"/>
    <property type="evidence" value="ECO:0007669"/>
    <property type="project" value="Ensembl"/>
</dbReference>
<dbReference type="GO" id="GO:0043029">
    <property type="term" value="P:T cell homeostasis"/>
    <property type="evidence" value="ECO:0007669"/>
    <property type="project" value="Ensembl"/>
</dbReference>
<dbReference type="GO" id="GO:0042098">
    <property type="term" value="P:T cell proliferation"/>
    <property type="evidence" value="ECO:0007669"/>
    <property type="project" value="Ensembl"/>
</dbReference>
<dbReference type="GO" id="GO:0002513">
    <property type="term" value="P:tolerance induction to self antigen"/>
    <property type="evidence" value="ECO:0007669"/>
    <property type="project" value="Ensembl"/>
</dbReference>
<dbReference type="GO" id="GO:0007179">
    <property type="term" value="P:transforming growth factor beta receptor signaling pathway"/>
    <property type="evidence" value="ECO:0000250"/>
    <property type="project" value="UniProtKB"/>
</dbReference>
<dbReference type="GO" id="GO:0001657">
    <property type="term" value="P:ureteric bud development"/>
    <property type="evidence" value="ECO:0007669"/>
    <property type="project" value="Ensembl"/>
</dbReference>
<dbReference type="GO" id="GO:0001570">
    <property type="term" value="P:vasculogenesis"/>
    <property type="evidence" value="ECO:0007669"/>
    <property type="project" value="Ensembl"/>
</dbReference>
<dbReference type="GO" id="GO:0055010">
    <property type="term" value="P:ventricular cardiac muscle tissue morphogenesis"/>
    <property type="evidence" value="ECO:0007669"/>
    <property type="project" value="Ensembl"/>
</dbReference>
<dbReference type="CDD" id="cd19384">
    <property type="entry name" value="TGF_beta_TGFB1"/>
    <property type="match status" value="1"/>
</dbReference>
<dbReference type="FunFam" id="2.10.90.10:FF:000004">
    <property type="entry name" value="Transforming growth factor beta"/>
    <property type="match status" value="1"/>
</dbReference>
<dbReference type="FunFam" id="2.60.120.970:FF:000010">
    <property type="entry name" value="Transforming growth factor beta"/>
    <property type="match status" value="1"/>
</dbReference>
<dbReference type="Gene3D" id="2.60.120.970">
    <property type="match status" value="1"/>
</dbReference>
<dbReference type="Gene3D" id="2.10.90.10">
    <property type="entry name" value="Cystine-knot cytokines"/>
    <property type="match status" value="1"/>
</dbReference>
<dbReference type="InterPro" id="IPR029034">
    <property type="entry name" value="Cystine-knot_cytokine"/>
</dbReference>
<dbReference type="InterPro" id="IPR001839">
    <property type="entry name" value="TGF-b_C"/>
</dbReference>
<dbReference type="InterPro" id="IPR001111">
    <property type="entry name" value="TGF-b_propeptide"/>
</dbReference>
<dbReference type="InterPro" id="IPR016319">
    <property type="entry name" value="TGF-beta"/>
</dbReference>
<dbReference type="InterPro" id="IPR015615">
    <property type="entry name" value="TGF-beta-rel"/>
</dbReference>
<dbReference type="InterPro" id="IPR003939">
    <property type="entry name" value="TGFb1"/>
</dbReference>
<dbReference type="InterPro" id="IPR017948">
    <property type="entry name" value="TGFb_CS"/>
</dbReference>
<dbReference type="PANTHER" id="PTHR11848">
    <property type="entry name" value="TGF-BETA FAMILY"/>
    <property type="match status" value="1"/>
</dbReference>
<dbReference type="PANTHER" id="PTHR11848:SF125">
    <property type="entry name" value="TRANSFORMING GROWTH FACTOR BETA-1 PROPROTEIN"/>
    <property type="match status" value="1"/>
</dbReference>
<dbReference type="Pfam" id="PF00019">
    <property type="entry name" value="TGF_beta"/>
    <property type="match status" value="1"/>
</dbReference>
<dbReference type="Pfam" id="PF00688">
    <property type="entry name" value="TGFb_propeptide"/>
    <property type="match status" value="1"/>
</dbReference>
<dbReference type="PIRSF" id="PIRSF001787">
    <property type="entry name" value="TGF-beta"/>
    <property type="match status" value="1"/>
</dbReference>
<dbReference type="PRINTS" id="PR01423">
    <property type="entry name" value="TGFBETA"/>
</dbReference>
<dbReference type="PRINTS" id="PR01424">
    <property type="entry name" value="TGFBETA1"/>
</dbReference>
<dbReference type="SMART" id="SM00204">
    <property type="entry name" value="TGFB"/>
    <property type="match status" value="1"/>
</dbReference>
<dbReference type="SUPFAM" id="SSF57501">
    <property type="entry name" value="Cystine-knot cytokines"/>
    <property type="match status" value="1"/>
</dbReference>
<dbReference type="PROSITE" id="PS00250">
    <property type="entry name" value="TGF_BETA_1"/>
    <property type="match status" value="1"/>
</dbReference>
<dbReference type="PROSITE" id="PS51362">
    <property type="entry name" value="TGF_BETA_2"/>
    <property type="match status" value="1"/>
</dbReference>
<gene>
    <name type="primary">TGFB1</name>
</gene>
<protein>
    <recommendedName>
        <fullName>Transforming growth factor beta-1 proprotein</fullName>
    </recommendedName>
    <component>
        <recommendedName>
            <fullName>Latency-associated peptide</fullName>
            <shortName>LAP</shortName>
        </recommendedName>
    </component>
    <component>
        <recommendedName>
            <fullName>Transforming growth factor beta-1</fullName>
            <shortName>TGF-beta-1</shortName>
        </recommendedName>
    </component>
</protein>
<reference key="1">
    <citation type="journal article" date="1987" name="Nucleic Acids Res.">
        <title>Sequence of the porcine transforming growth factor-beta precursor.</title>
        <authorList>
            <person name="Derynck R."/>
            <person name="Rhee L."/>
        </authorList>
    </citation>
    <scope>NUCLEOTIDE SEQUENCE [MRNA]</scope>
    <source>
        <tissue>Ovary</tissue>
    </source>
</reference>
<reference key="2">
    <citation type="journal article" date="1988" name="J. Biol. Chem.">
        <title>cDNA cloning of porcine transforming growth factor-beta 1 mRNAs. Evidence for alternate splicing and polyadenylation.</title>
        <authorList>
            <person name="Kondaiah P."/>
            <person name="van Obberghen-Schilling E."/>
            <person name="Ludwig R.L."/>
            <person name="Dhar R."/>
            <person name="Sporn M.B."/>
            <person name="Roberts A.B."/>
        </authorList>
    </citation>
    <scope>NUCLEOTIDE SEQUENCE [MRNA]</scope>
    <scope>VARIANT LEU-114</scope>
    <source>
        <strain>Miniature swine</strain>
    </source>
</reference>
<reference key="3">
    <citation type="journal article" date="1988" name="Nucleic Acids Res.">
        <title>Nucleotide sequence of chicken transforming growth factor-beta 1 (TGF-beta 1).</title>
        <authorList>
            <person name="Jakowlew S.B."/>
            <person name="Dillard P.J."/>
            <person name="Sporn M.B."/>
            <person name="Roberts A.B."/>
        </authorList>
    </citation>
    <scope>NUCLEOTIDE SEQUENCE [MRNA]</scope>
</reference>
<reference key="4">
    <citation type="unpublished observations" date="1996-03">
        <authorList>
            <person name="Jakowlew S.B."/>
        </authorList>
    </citation>
    <scope>SHOWS THAT SEQUENCE DESCRIBED IN PUBMED:3166520 ORIGINATES FROM PIG</scope>
</reference>
<reference key="5">
    <citation type="journal article" date="2002" name="Anim. Genet.">
        <title>Polymorphism in the porcine transforming growth factor-beta1 gene.</title>
        <authorList>
            <person name="Wimmers K."/>
            <person name="Chomdej S."/>
            <person name="Ponsuksili S."/>
            <person name="Schellander K."/>
        </authorList>
    </citation>
    <scope>NUCLEOTIDE SEQUENCE [MRNA]</scope>
</reference>
<reference key="6">
    <citation type="submission" date="2009-11" db="EMBL/GenBank/DDBJ databases">
        <authorList>
            <consortium name="Porcine genome sequencing project"/>
        </authorList>
    </citation>
    <scope>NUCLEOTIDE SEQUENCE [LARGE SCALE GENOMIC DNA]</scope>
    <source>
        <strain>Duroc</strain>
    </source>
</reference>
<reference key="7">
    <citation type="journal article" date="1987" name="Cell">
        <title>The transforming growth factor-beta system, a complex pattern of cross-reactive ligands and receptors.</title>
        <authorList>
            <person name="Cheifetz S."/>
            <person name="Weatherbee J.A."/>
            <person name="Tsang M.L.S."/>
            <person name="Anderson J.K."/>
            <person name="Mole J.E."/>
            <person name="Lucas R."/>
            <person name="Massague J."/>
        </authorList>
    </citation>
    <scope>PROTEIN SEQUENCE OF 279-322</scope>
</reference>
<reference key="8">
    <citation type="journal article" date="2011" name="Nature">
        <title>Latent TGF-beta structure and activation.</title>
        <authorList>
            <person name="Shi M."/>
            <person name="Zhu J."/>
            <person name="Wang R."/>
            <person name="Chen X."/>
            <person name="Mi L."/>
            <person name="Walz T."/>
            <person name="Springer T.A."/>
        </authorList>
    </citation>
    <scope>X-RAY CRYSTALLOGRAPHY (3.05 ANGSTROMS) OF 30-390 OF MUTANT SER-33</scope>
    <scope>SUBUNIT</scope>
    <scope>GLYCOSYLATION AT ASN-82 AND ASN-136</scope>
    <scope>DISULFIDE BONDS</scope>
    <scope>MUTAGENESIS OF TYR-103 AND TYR-104</scope>
    <scope>ACTIVATION MECHANISM</scope>
</reference>
<reference evidence="11" key="9">
    <citation type="journal article" date="2018" name="J. Biol. Chem.">
        <title>Prodomain-growth factor swapping in the structure of pro-TGF-beta1.</title>
        <authorList>
            <person name="Zhao B."/>
            <person name="Xu S."/>
            <person name="Dong X."/>
            <person name="Lu C."/>
            <person name="Springer T.A."/>
        </authorList>
    </citation>
    <scope>X-RAY CRYSTALLOGRAPHY (2.90 ANGSTROMS) OF 30-390</scope>
    <scope>DISULFIDE BONDS</scope>
</reference>
<organism>
    <name type="scientific">Sus scrofa</name>
    <name type="common">Pig</name>
    <dbReference type="NCBI Taxonomy" id="9823"/>
    <lineage>
        <taxon>Eukaryota</taxon>
        <taxon>Metazoa</taxon>
        <taxon>Chordata</taxon>
        <taxon>Craniata</taxon>
        <taxon>Vertebrata</taxon>
        <taxon>Euteleostomi</taxon>
        <taxon>Mammalia</taxon>
        <taxon>Eutheria</taxon>
        <taxon>Laurasiatheria</taxon>
        <taxon>Artiodactyla</taxon>
        <taxon>Suina</taxon>
        <taxon>Suidae</taxon>
        <taxon>Sus</taxon>
    </lineage>
</organism>
<comment type="function">
    <text evidence="1">Transforming growth factor beta-1 proprotein: Precursor of the Latency-associated peptide (LAP) and Transforming growth factor beta-1 (TGF-beta-1) chains, which constitute the regulatory and active subunit of TGF-beta-1, respectively.</text>
</comment>
<comment type="function">
    <molecule>Latency-associated peptide</molecule>
    <text evidence="1">Required to maintain the Transforming growth factor beta-1 (TGF-beta-1) chain in a latent state during storage in extracellular matrix. Associates non-covalently with TGF-beta-1 and regulates its activation via interaction with 'milieu molecules', such as LTBP1, LRRC32/GARP and LRRC33/NRROS, that control activation of TGF-beta-1. Interaction with LRRC33/NRROS regulates activation of TGF-beta-1 in macrophages and microglia. Interaction with LRRC32/GARP controls activation of TGF-beta-1 on the surface of activated regulatory T-cells (Tregs). Interaction with integrins (ITGAV:ITGB6 or ITGAV:ITGB8) results in distortion of the Latency-associated peptide chain and subsequent release of the active TGF-beta-1.</text>
</comment>
<comment type="function">
    <molecule>Transforming growth factor beta-1</molecule>
    <text evidence="1 2">Multifunctional protein that regulates the growth and differentiation of various cell types and is involved in various processes, such as normal development, immune function, microglia function and responses to neurodegeneration (By similarity). Activation into mature form follows different steps: following cleavage of the proprotein in the Golgi apparatus, Latency-associated peptide (LAP) and Transforming growth factor beta-1 (TGF-beta-1) chains remain non-covalently linked rendering TGF-beta-1 inactive during storage in extracellular matrix. At the same time, LAP chain interacts with 'milieu molecules', such as LTBP1, LRRC32/GARP and LRRC33/NRROS that control activation of TGF-beta-1 and maintain it in a latent state during storage in extracellular milieus. TGF-beta-1 is released from LAP by integrins (ITGAV:ITGB6 or ITGAV:ITGB8): integrin-binding to LAP stabilizes an alternative conformation of the LAP bowtie tail and results in distortion of the LAP chain and subsequent release of the active TGF-beta-1. Once activated following release of LAP, TGF-beta-1 acts by binding to TGF-beta receptors (TGFBR1 and TGFBR2), which transduce signal (By similarity). While expressed by many cells types, TGF-beta-1 only has a very localized range of action within cell environment thanks to fine regulation of its activation by Latency-associated peptide chain (LAP) and 'milieu molecules'. Plays an important role in bone remodeling: acts as a potent stimulator of osteoblastic bone formation, causing chemotaxis, proliferation and differentiation in committed osteoblasts. Can promote either T-helper 17 cells (Th17) or regulatory T-cells (Treg) lineage differentiation in a concentration-dependent manner. At high concentrations, leads to FOXP3-mediated suppression of RORC and down-regulation of IL-17 expression, favoring Treg cell development. At low concentrations in concert with IL-6 and IL-21, leads to expression of the IL-17 and IL-23 receptors, favoring differentiation to Th17 cells (By similarity). Stimulates sustained production of collagen through the activation of CREB3L1 by regulated intramembrane proteolysis (RIP). Mediates SMAD2/3 activation by inducing its phosphorylation and subsequent translocation to the nucleus. Positively regulates odontoblastic differentiation in dental papilla cells, via promotion of IPO7-mediated translocation of phosphorylated SMAD2 to the nucleus and subsequent transcription of target genes (By similarity). Can induce epithelial-to-mesenchymal transition (EMT) and cell migration in various cell types (By similarity).</text>
</comment>
<comment type="subunit">
    <text evidence="1 2">Homodimer; disulfide-linked. Interacts with the serine proteases, HTRA1 and HTRA3: the interaction with either inhibits TGFB1-mediated signaling and the HTRA protease activity is required for this inhibition. May interact with THSD4; this interaction may lead to sequestration by FBN1 microfibril assembly and attenuation of TGFB signaling. Interacts with CD109, DPT and ASPN. Interacts with EFEMP2. Interacts with TSKU; the interaction contributes to regulation of the hair cycle. Interacts with TGFBR3 (By similarity).</text>
</comment>
<comment type="subunit">
    <molecule>Latency-associated peptide</molecule>
    <text evidence="1 2">Homodimer; disulfide-linked. Interacts with transforming growth factor beta-1 (TGF-beta-1) chain; interaction is non-covalent and maintains TGF-beta-1 in a latent state; each latency-associated peptide (LAP) monomer interacts with TGF-beta-1 in the other monomer. Interacts with LTBP1; leading to regulation of TGF-beta-1 activation. Interacts with LRRC32/GARP; leading to regulation of TGF-beta-1 activation on the surface of activated regulatory T-cells (Tregs). Interacts with LRRC33/NRROS; leading to regulation of TGF-beta-1 activation in macrophages and microglia. Interacts (via cell attachment site) with integrins ITGAV and ITGB6 (ITGAV:ITGB6), leading to release of the active TGF-beta-1. Interacts with NREP; the interaction results in a decrease in TGFB1 autoinduction. Interacts with HSP90AB1; inhibits latent TGFB1 activation.</text>
</comment>
<comment type="subunit">
    <molecule>Transforming growth factor beta-1</molecule>
    <text evidence="1">Homodimer; disulfide-linked. Interacts with TGF-beta receptors (TGFBR1 and TGFBR2), leading to signal transduction.</text>
</comment>
<comment type="interaction">
    <interactant intactId="EBI-907660">
        <id>P07200</id>
    </interactant>
    <interactant intactId="EBI-907660">
        <id>P07200</id>
        <label>TGFB1</label>
    </interactant>
    <organismsDiffer>false</organismsDiffer>
    <experiments>2</experiments>
</comment>
<comment type="interaction">
    <interactant intactId="EBI-907660">
        <id>P07200</id>
    </interactant>
    <interactant intactId="EBI-906561">
        <id>Q99K41</id>
        <label>Emilin1</label>
    </interactant>
    <organismsDiffer>true</organismsDiffer>
    <experiments>2</experiments>
</comment>
<comment type="interaction">
    <interactant intactId="EBI-907660">
        <id>P07200</id>
    </interactant>
    <interactant intactId="EBI-296151">
        <id>P37173</id>
        <label>TGFBR2</label>
    </interactant>
    <organismsDiffer>true</organismsDiffer>
    <experiments>2</experiments>
</comment>
<comment type="subcellular location">
    <molecule>Latency-associated peptide</molecule>
    <subcellularLocation>
        <location evidence="1">Secreted</location>
        <location evidence="1">Extracellular space</location>
        <location evidence="1">Extracellular matrix</location>
    </subcellularLocation>
</comment>
<comment type="subcellular location">
    <molecule>Transforming growth factor beta-1</molecule>
    <subcellularLocation>
        <location evidence="1">Secreted</location>
    </subcellularLocation>
</comment>
<comment type="domain">
    <molecule>Latency-associated peptide</molecule>
    <text evidence="4">The 'straitjacket' and 'arm' domains encircle the Transforming growth factor beta-1 (TGF-beta-1) monomers and are fastened together by strong bonding between Lys-56 and Tyr-103/Tyr-104.</text>
</comment>
<comment type="domain">
    <molecule>Latency-associated peptide</molecule>
    <text evidence="1 4">The cell attachment site motif mediates binding to integrins (ITGAV:ITGB6 or ITGAV:ITGB8). The motif locates to a long loop in the arm domain called the bowtie tail. Integrin-binding stabilizes an alternative conformation of the bowtie tail (PubMed:21677751). Activation by integrin requires force application by the actin cytoskeleton, which is resisted by the 'milieu molecules' (such as LTBP1, LRRC32/GARP and/or LRRC33/NRROS), resulting in distortion of the prodomain and release of the active TGF-beta-1 (By similarity).</text>
</comment>
<comment type="PTM">
    <text evidence="1">Transforming growth factor beta-1 proprotein: The precursor proprotein is cleaved in the Golgi apparatus by FURIN to form Transforming growth factor beta-1 (TGF-beta-1) and Latency-associated peptide (LAP) chains, which remain non-covalently linked, rendering TGF-beta-1 inactive.</text>
</comment>
<comment type="PTM">
    <molecule>Latency-associated peptide</molecule>
    <text evidence="1">N-glycosylated. Deglycosylation leads to activation of Transforming growth factor beta-1 (TGF-beta-1); mechanisms triggering deglycosylation-driven activation of TGF-beta-1 are however unclear.</text>
</comment>
<comment type="similarity">
    <text evidence="7">Belongs to the TGF-beta family.</text>
</comment>
<comment type="caution">
    <text evidence="9 10">PubMed:3166520 sequence which was said to originate from chicken. It however seems to originate from pig.</text>
</comment>
<name>TGFB1_PIG</name>